<evidence type="ECO:0000255" key="1">
    <source>
        <dbReference type="HAMAP-Rule" id="MF_00508"/>
    </source>
</evidence>
<evidence type="ECO:0000305" key="2"/>
<reference key="1">
    <citation type="journal article" date="2007" name="Science">
        <title>The Calyptogena magnifica chemoautotrophic symbiont genome.</title>
        <authorList>
            <person name="Newton I.L.G."/>
            <person name="Woyke T."/>
            <person name="Auchtung T.A."/>
            <person name="Dilly G.F."/>
            <person name="Dutton R.J."/>
            <person name="Fisher M.C."/>
            <person name="Fontanez K.M."/>
            <person name="Lau E."/>
            <person name="Stewart F.J."/>
            <person name="Richardson P.M."/>
            <person name="Barry K.W."/>
            <person name="Saunders E."/>
            <person name="Detter J.C."/>
            <person name="Wu D."/>
            <person name="Eisen J.A."/>
            <person name="Cavanaugh C.M."/>
        </authorList>
    </citation>
    <scope>NUCLEOTIDE SEQUENCE [LARGE SCALE GENOMIC DNA]</scope>
</reference>
<sequence length="103" mass="11586">MSNQNIRIKLKAFDHRLIDKSALEIVETAKRTGASVRGPIPLPTKKERFTVLTSPHVNKKARDQYELRTYVRLMDVISPTDKTVDALMKLDLAAGVDVAIKLN</sequence>
<feature type="chain" id="PRO_1000015104" description="Small ribosomal subunit protein uS10">
    <location>
        <begin position="1"/>
        <end position="103"/>
    </location>
</feature>
<proteinExistence type="inferred from homology"/>
<accession>A1AVJ9</accession>
<protein>
    <recommendedName>
        <fullName evidence="1">Small ribosomal subunit protein uS10</fullName>
    </recommendedName>
    <alternativeName>
        <fullName evidence="2">30S ribosomal protein S10</fullName>
    </alternativeName>
</protein>
<comment type="function">
    <text evidence="1">Involved in the binding of tRNA to the ribosomes.</text>
</comment>
<comment type="subunit">
    <text evidence="1">Part of the 30S ribosomal subunit.</text>
</comment>
<comment type="similarity">
    <text evidence="1">Belongs to the universal ribosomal protein uS10 family.</text>
</comment>
<gene>
    <name evidence="1" type="primary">rpsJ</name>
    <name type="ordered locus">Rmag_0164</name>
</gene>
<dbReference type="EMBL" id="CP000488">
    <property type="protein sequence ID" value="ABL01956.1"/>
    <property type="molecule type" value="Genomic_DNA"/>
</dbReference>
<dbReference type="RefSeq" id="WP_011737582.1">
    <property type="nucleotide sequence ID" value="NC_008610.1"/>
</dbReference>
<dbReference type="SMR" id="A1AVJ9"/>
<dbReference type="STRING" id="413404.Rmag_0164"/>
<dbReference type="KEGG" id="rma:Rmag_0164"/>
<dbReference type="eggNOG" id="COG0051">
    <property type="taxonomic scope" value="Bacteria"/>
</dbReference>
<dbReference type="HOGENOM" id="CLU_122625_1_3_6"/>
<dbReference type="OrthoDB" id="9804464at2"/>
<dbReference type="Proteomes" id="UP000002587">
    <property type="component" value="Chromosome"/>
</dbReference>
<dbReference type="GO" id="GO:1990904">
    <property type="term" value="C:ribonucleoprotein complex"/>
    <property type="evidence" value="ECO:0007669"/>
    <property type="project" value="UniProtKB-KW"/>
</dbReference>
<dbReference type="GO" id="GO:0005840">
    <property type="term" value="C:ribosome"/>
    <property type="evidence" value="ECO:0007669"/>
    <property type="project" value="UniProtKB-KW"/>
</dbReference>
<dbReference type="GO" id="GO:0003735">
    <property type="term" value="F:structural constituent of ribosome"/>
    <property type="evidence" value="ECO:0007669"/>
    <property type="project" value="InterPro"/>
</dbReference>
<dbReference type="GO" id="GO:0000049">
    <property type="term" value="F:tRNA binding"/>
    <property type="evidence" value="ECO:0007669"/>
    <property type="project" value="UniProtKB-UniRule"/>
</dbReference>
<dbReference type="GO" id="GO:0006412">
    <property type="term" value="P:translation"/>
    <property type="evidence" value="ECO:0007669"/>
    <property type="project" value="UniProtKB-UniRule"/>
</dbReference>
<dbReference type="FunFam" id="3.30.70.600:FF:000001">
    <property type="entry name" value="30S ribosomal protein S10"/>
    <property type="match status" value="1"/>
</dbReference>
<dbReference type="Gene3D" id="3.30.70.600">
    <property type="entry name" value="Ribosomal protein S10 domain"/>
    <property type="match status" value="1"/>
</dbReference>
<dbReference type="HAMAP" id="MF_00508">
    <property type="entry name" value="Ribosomal_uS10"/>
    <property type="match status" value="1"/>
</dbReference>
<dbReference type="InterPro" id="IPR001848">
    <property type="entry name" value="Ribosomal_uS10"/>
</dbReference>
<dbReference type="InterPro" id="IPR018268">
    <property type="entry name" value="Ribosomal_uS10_CS"/>
</dbReference>
<dbReference type="InterPro" id="IPR027486">
    <property type="entry name" value="Ribosomal_uS10_dom"/>
</dbReference>
<dbReference type="InterPro" id="IPR036838">
    <property type="entry name" value="Ribosomal_uS10_dom_sf"/>
</dbReference>
<dbReference type="NCBIfam" id="NF001861">
    <property type="entry name" value="PRK00596.1"/>
    <property type="match status" value="1"/>
</dbReference>
<dbReference type="NCBIfam" id="TIGR01049">
    <property type="entry name" value="rpsJ_bact"/>
    <property type="match status" value="1"/>
</dbReference>
<dbReference type="PANTHER" id="PTHR11700">
    <property type="entry name" value="30S RIBOSOMAL PROTEIN S10 FAMILY MEMBER"/>
    <property type="match status" value="1"/>
</dbReference>
<dbReference type="Pfam" id="PF00338">
    <property type="entry name" value="Ribosomal_S10"/>
    <property type="match status" value="1"/>
</dbReference>
<dbReference type="PRINTS" id="PR00971">
    <property type="entry name" value="RIBOSOMALS10"/>
</dbReference>
<dbReference type="SMART" id="SM01403">
    <property type="entry name" value="Ribosomal_S10"/>
    <property type="match status" value="1"/>
</dbReference>
<dbReference type="SUPFAM" id="SSF54999">
    <property type="entry name" value="Ribosomal protein S10"/>
    <property type="match status" value="1"/>
</dbReference>
<dbReference type="PROSITE" id="PS00361">
    <property type="entry name" value="RIBOSOMAL_S10"/>
    <property type="match status" value="1"/>
</dbReference>
<keyword id="KW-0687">Ribonucleoprotein</keyword>
<keyword id="KW-0689">Ribosomal protein</keyword>
<organism>
    <name type="scientific">Ruthia magnifica subsp. Calyptogena magnifica</name>
    <dbReference type="NCBI Taxonomy" id="413404"/>
    <lineage>
        <taxon>Bacteria</taxon>
        <taxon>Pseudomonadati</taxon>
        <taxon>Pseudomonadota</taxon>
        <taxon>Gammaproteobacteria</taxon>
        <taxon>Candidatus Pseudothioglobaceae</taxon>
        <taxon>Candidatus Ruthturnera</taxon>
    </lineage>
</organism>
<name>RS10_RUTMC</name>